<name>TRUB_MYCGA</name>
<evidence type="ECO:0000250" key="1"/>
<evidence type="ECO:0000305" key="2"/>
<protein>
    <recommendedName>
        <fullName>tRNA pseudouridine synthase B</fullName>
        <ecNumber>5.4.99.25</ecNumber>
    </recommendedName>
    <alternativeName>
        <fullName>tRNA pseudouridine(55) synthase</fullName>
        <shortName>Psi55 synthase</shortName>
    </alternativeName>
    <alternativeName>
        <fullName>tRNA pseudouridylate synthase</fullName>
    </alternativeName>
    <alternativeName>
        <fullName>tRNA-uridine isomerase</fullName>
    </alternativeName>
</protein>
<accession>P59879</accession>
<proteinExistence type="inferred from homology"/>
<dbReference type="EC" id="5.4.99.25"/>
<dbReference type="EMBL" id="AE015450">
    <property type="protein sequence ID" value="AAP56469.2"/>
    <property type="molecule type" value="Genomic_DNA"/>
</dbReference>
<dbReference type="RefSeq" id="WP_011113348.1">
    <property type="nucleotide sequence ID" value="NC_004829.2"/>
</dbReference>
<dbReference type="SMR" id="P59879"/>
<dbReference type="GeneID" id="93509934"/>
<dbReference type="KEGG" id="mga:MGA_0831"/>
<dbReference type="HOGENOM" id="CLU_032087_2_0_14"/>
<dbReference type="OrthoDB" id="9802309at2"/>
<dbReference type="Proteomes" id="UP000001418">
    <property type="component" value="Chromosome"/>
</dbReference>
<dbReference type="GO" id="GO:0003723">
    <property type="term" value="F:RNA binding"/>
    <property type="evidence" value="ECO:0007669"/>
    <property type="project" value="InterPro"/>
</dbReference>
<dbReference type="GO" id="GO:0160148">
    <property type="term" value="F:tRNA pseudouridine(55) synthase activity"/>
    <property type="evidence" value="ECO:0007669"/>
    <property type="project" value="UniProtKB-EC"/>
</dbReference>
<dbReference type="GO" id="GO:1990481">
    <property type="term" value="P:mRNA pseudouridine synthesis"/>
    <property type="evidence" value="ECO:0007669"/>
    <property type="project" value="TreeGrafter"/>
</dbReference>
<dbReference type="GO" id="GO:0006400">
    <property type="term" value="P:tRNA modification"/>
    <property type="evidence" value="ECO:0007669"/>
    <property type="project" value="TreeGrafter"/>
</dbReference>
<dbReference type="Gene3D" id="3.30.2350.10">
    <property type="entry name" value="Pseudouridine synthase"/>
    <property type="match status" value="1"/>
</dbReference>
<dbReference type="InterPro" id="IPR020103">
    <property type="entry name" value="PsdUridine_synth_cat_dom_sf"/>
</dbReference>
<dbReference type="InterPro" id="IPR002501">
    <property type="entry name" value="PsdUridine_synth_N"/>
</dbReference>
<dbReference type="InterPro" id="IPR014780">
    <property type="entry name" value="tRNA_psdUridine_synth_TruB"/>
</dbReference>
<dbReference type="NCBIfam" id="TIGR00431">
    <property type="entry name" value="TruB"/>
    <property type="match status" value="1"/>
</dbReference>
<dbReference type="PANTHER" id="PTHR13767:SF2">
    <property type="entry name" value="PSEUDOURIDYLATE SYNTHASE TRUB1"/>
    <property type="match status" value="1"/>
</dbReference>
<dbReference type="PANTHER" id="PTHR13767">
    <property type="entry name" value="TRNA-PSEUDOURIDINE SYNTHASE"/>
    <property type="match status" value="1"/>
</dbReference>
<dbReference type="Pfam" id="PF01509">
    <property type="entry name" value="TruB_N"/>
    <property type="match status" value="1"/>
</dbReference>
<dbReference type="SUPFAM" id="SSF55120">
    <property type="entry name" value="Pseudouridine synthase"/>
    <property type="match status" value="1"/>
</dbReference>
<gene>
    <name type="primary">truB</name>
    <name type="ordered locus">MYCGA1190</name>
    <name type="ORF">MGA_0831</name>
</gene>
<comment type="function">
    <text evidence="1">Responsible for synthesis of pseudouridine from uracil-55 in the psi GC loop of transfer RNAs.</text>
</comment>
<comment type="catalytic activity">
    <reaction>
        <text>uridine(55) in tRNA = pseudouridine(55) in tRNA</text>
        <dbReference type="Rhea" id="RHEA:42532"/>
        <dbReference type="Rhea" id="RHEA-COMP:10101"/>
        <dbReference type="Rhea" id="RHEA-COMP:10102"/>
        <dbReference type="ChEBI" id="CHEBI:65314"/>
        <dbReference type="ChEBI" id="CHEBI:65315"/>
        <dbReference type="EC" id="5.4.99.25"/>
    </reaction>
</comment>
<comment type="similarity">
    <text evidence="2">Belongs to the pseudouridine synthase TruB family. Type 1 subfamily.</text>
</comment>
<reference key="1">
    <citation type="journal article" date="2003" name="Microbiology">
        <title>The complete genome sequence of the avian pathogen Mycoplasma gallisepticum strain R(low).</title>
        <authorList>
            <person name="Papazisi L."/>
            <person name="Gorton T.S."/>
            <person name="Kutish G."/>
            <person name="Markham P.F."/>
            <person name="Browning G.F."/>
            <person name="Nguyen D.K."/>
            <person name="Swartzell S."/>
            <person name="Madan A."/>
            <person name="Mahairas G."/>
            <person name="Geary S.J."/>
        </authorList>
    </citation>
    <scope>NUCLEOTIDE SEQUENCE [LARGE SCALE GENOMIC DNA]</scope>
    <source>
        <strain>R(low / passage 15 / clone 2)</strain>
    </source>
</reference>
<keyword id="KW-0413">Isomerase</keyword>
<keyword id="KW-1185">Reference proteome</keyword>
<keyword id="KW-0819">tRNA processing</keyword>
<sequence length="214" mass="24718">MDFNNKIVIIDKPKNISSAFCLNLFKKRFNIKKAGHNGTLDPLASGVLVVATNKRTKELSQLNQDDKQYLVKLKFNTHTDSYDRLGKVIRTTNYVPEIKQLNDYLTSLDNHSFYQLPPNFSALKVNGVRAYQLARKAVDFELEKRPTTIYKAKLISYYDDYAEILLDVKKGFYVRSFVVDLASQFNTTAMMVDLVRTRSGQYSLKDVIDYQFNK</sequence>
<feature type="chain" id="PRO_0000121864" description="tRNA pseudouridine synthase B">
    <location>
        <begin position="1"/>
        <end position="214"/>
    </location>
</feature>
<feature type="active site" description="Nucleophile" evidence="1">
    <location>
        <position position="41"/>
    </location>
</feature>
<organism>
    <name type="scientific">Mycoplasmoides gallisepticum (strain R(low / passage 15 / clone 2))</name>
    <name type="common">Mycoplasma gallisepticum</name>
    <dbReference type="NCBI Taxonomy" id="710127"/>
    <lineage>
        <taxon>Bacteria</taxon>
        <taxon>Bacillati</taxon>
        <taxon>Mycoplasmatota</taxon>
        <taxon>Mycoplasmoidales</taxon>
        <taxon>Mycoplasmoidaceae</taxon>
        <taxon>Mycoplasmoides</taxon>
    </lineage>
</organism>